<accession>B7V8B6</accession>
<comment type="function">
    <text evidence="1">Catalyzes the transfer of endogenously produced octanoic acid from octanoyl-acyl-carrier-protein onto the lipoyl domains of lipoate-dependent enzymes. Lipoyl-ACP can also act as a substrate although octanoyl-ACP is likely to be the physiological substrate.</text>
</comment>
<comment type="catalytic activity">
    <reaction evidence="1">
        <text>octanoyl-[ACP] + L-lysyl-[protein] = N(6)-octanoyl-L-lysyl-[protein] + holo-[ACP] + H(+)</text>
        <dbReference type="Rhea" id="RHEA:17665"/>
        <dbReference type="Rhea" id="RHEA-COMP:9636"/>
        <dbReference type="Rhea" id="RHEA-COMP:9685"/>
        <dbReference type="Rhea" id="RHEA-COMP:9752"/>
        <dbReference type="Rhea" id="RHEA-COMP:9928"/>
        <dbReference type="ChEBI" id="CHEBI:15378"/>
        <dbReference type="ChEBI" id="CHEBI:29969"/>
        <dbReference type="ChEBI" id="CHEBI:64479"/>
        <dbReference type="ChEBI" id="CHEBI:78463"/>
        <dbReference type="ChEBI" id="CHEBI:78809"/>
        <dbReference type="EC" id="2.3.1.181"/>
    </reaction>
</comment>
<comment type="pathway">
    <text evidence="1">Protein modification; protein lipoylation via endogenous pathway; protein N(6)-(lipoyl)lysine from octanoyl-[acyl-carrier-protein]: step 1/2.</text>
</comment>
<comment type="subcellular location">
    <subcellularLocation>
        <location evidence="1">Cytoplasm</location>
    </subcellularLocation>
</comment>
<comment type="miscellaneous">
    <text evidence="1">In the reaction, the free carboxyl group of octanoic acid is attached via an amide linkage to the epsilon-amino group of a specific lysine residue of lipoyl domains of lipoate-dependent enzymes.</text>
</comment>
<comment type="similarity">
    <text evidence="1">Belongs to the LipB family.</text>
</comment>
<dbReference type="EC" id="2.3.1.181" evidence="1"/>
<dbReference type="EMBL" id="FM209186">
    <property type="protein sequence ID" value="CAW25706.1"/>
    <property type="molecule type" value="Genomic_DNA"/>
</dbReference>
<dbReference type="RefSeq" id="WP_003093177.1">
    <property type="nucleotide sequence ID" value="NC_011770.1"/>
</dbReference>
<dbReference type="SMR" id="B7V8B6"/>
<dbReference type="GeneID" id="77219458"/>
<dbReference type="KEGG" id="pag:PLES_09791"/>
<dbReference type="HOGENOM" id="CLU_035168_3_1_6"/>
<dbReference type="UniPathway" id="UPA00538">
    <property type="reaction ID" value="UER00592"/>
</dbReference>
<dbReference type="GO" id="GO:0005737">
    <property type="term" value="C:cytoplasm"/>
    <property type="evidence" value="ECO:0007669"/>
    <property type="project" value="UniProtKB-SubCell"/>
</dbReference>
<dbReference type="GO" id="GO:0033819">
    <property type="term" value="F:lipoyl(octanoyl) transferase activity"/>
    <property type="evidence" value="ECO:0007669"/>
    <property type="project" value="UniProtKB-EC"/>
</dbReference>
<dbReference type="GO" id="GO:0036211">
    <property type="term" value="P:protein modification process"/>
    <property type="evidence" value="ECO:0007669"/>
    <property type="project" value="InterPro"/>
</dbReference>
<dbReference type="CDD" id="cd16444">
    <property type="entry name" value="LipB"/>
    <property type="match status" value="1"/>
</dbReference>
<dbReference type="FunFam" id="3.30.930.10:FF:000020">
    <property type="entry name" value="Octanoyltransferase"/>
    <property type="match status" value="1"/>
</dbReference>
<dbReference type="Gene3D" id="3.30.930.10">
    <property type="entry name" value="Bira Bifunctional Protein, Domain 2"/>
    <property type="match status" value="1"/>
</dbReference>
<dbReference type="HAMAP" id="MF_00013">
    <property type="entry name" value="LipB"/>
    <property type="match status" value="1"/>
</dbReference>
<dbReference type="InterPro" id="IPR045864">
    <property type="entry name" value="aa-tRNA-synth_II/BPL/LPL"/>
</dbReference>
<dbReference type="InterPro" id="IPR004143">
    <property type="entry name" value="BPL_LPL_catalytic"/>
</dbReference>
<dbReference type="InterPro" id="IPR000544">
    <property type="entry name" value="Octanoyltransferase"/>
</dbReference>
<dbReference type="InterPro" id="IPR020605">
    <property type="entry name" value="Octanoyltransferase_CS"/>
</dbReference>
<dbReference type="NCBIfam" id="TIGR00214">
    <property type="entry name" value="lipB"/>
    <property type="match status" value="1"/>
</dbReference>
<dbReference type="NCBIfam" id="NF010922">
    <property type="entry name" value="PRK14342.1"/>
    <property type="match status" value="1"/>
</dbReference>
<dbReference type="PANTHER" id="PTHR10993:SF7">
    <property type="entry name" value="LIPOYLTRANSFERASE 2, MITOCHONDRIAL-RELATED"/>
    <property type="match status" value="1"/>
</dbReference>
<dbReference type="PANTHER" id="PTHR10993">
    <property type="entry name" value="OCTANOYLTRANSFERASE"/>
    <property type="match status" value="1"/>
</dbReference>
<dbReference type="Pfam" id="PF21948">
    <property type="entry name" value="LplA-B_cat"/>
    <property type="match status" value="1"/>
</dbReference>
<dbReference type="PIRSF" id="PIRSF016262">
    <property type="entry name" value="LPLase"/>
    <property type="match status" value="1"/>
</dbReference>
<dbReference type="SUPFAM" id="SSF55681">
    <property type="entry name" value="Class II aaRS and biotin synthetases"/>
    <property type="match status" value="1"/>
</dbReference>
<dbReference type="PROSITE" id="PS51733">
    <property type="entry name" value="BPL_LPL_CATALYTIC"/>
    <property type="match status" value="1"/>
</dbReference>
<dbReference type="PROSITE" id="PS01313">
    <property type="entry name" value="LIPB"/>
    <property type="match status" value="1"/>
</dbReference>
<keyword id="KW-0012">Acyltransferase</keyword>
<keyword id="KW-0963">Cytoplasm</keyword>
<keyword id="KW-0808">Transferase</keyword>
<proteinExistence type="inferred from homology"/>
<feature type="chain" id="PRO_1000116285" description="Octanoyltransferase">
    <location>
        <begin position="1"/>
        <end position="217"/>
    </location>
</feature>
<feature type="domain" description="BPL/LPL catalytic" evidence="2">
    <location>
        <begin position="31"/>
        <end position="206"/>
    </location>
</feature>
<feature type="active site" description="Acyl-thioester intermediate" evidence="1">
    <location>
        <position position="168"/>
    </location>
</feature>
<feature type="binding site" evidence="1">
    <location>
        <begin position="70"/>
        <end position="77"/>
    </location>
    <ligand>
        <name>substrate</name>
    </ligand>
</feature>
<feature type="binding site" evidence="1">
    <location>
        <begin position="137"/>
        <end position="139"/>
    </location>
    <ligand>
        <name>substrate</name>
    </ligand>
</feature>
<feature type="binding site" evidence="1">
    <location>
        <begin position="150"/>
        <end position="152"/>
    </location>
    <ligand>
        <name>substrate</name>
    </ligand>
</feature>
<feature type="site" description="Lowers pKa of active site Cys" evidence="1">
    <location>
        <position position="134"/>
    </location>
</feature>
<name>LIPB_PSEA8</name>
<organism>
    <name type="scientific">Pseudomonas aeruginosa (strain LESB58)</name>
    <dbReference type="NCBI Taxonomy" id="557722"/>
    <lineage>
        <taxon>Bacteria</taxon>
        <taxon>Pseudomonadati</taxon>
        <taxon>Pseudomonadota</taxon>
        <taxon>Gammaproteobacteria</taxon>
        <taxon>Pseudomonadales</taxon>
        <taxon>Pseudomonadaceae</taxon>
        <taxon>Pseudomonas</taxon>
    </lineage>
</organism>
<sequence>MGLELGFRELGEVPYEPTWHAMQRFVAERDKSVMDEAWLLQHPAVFTQGQAGKAEHVLFPGDIPVIQVDRGGQVTYHGPGQLVTYLLLDVRRLGLGVRELVSRIEQSLIGLLASYDVQAVAKPDAPGVYVDGAKIASLGLRIRNGCSFHGLALNLDMDLRPFQRINPCGYAGMPMTQLRDLVGPVDFAEVCTRLRAELVSRLGYAEQKTLTGGIELT</sequence>
<protein>
    <recommendedName>
        <fullName evidence="1">Octanoyltransferase</fullName>
        <ecNumber evidence="1">2.3.1.181</ecNumber>
    </recommendedName>
    <alternativeName>
        <fullName evidence="1">Lipoate-protein ligase B</fullName>
    </alternativeName>
    <alternativeName>
        <fullName evidence="1">Lipoyl/octanoyl transferase</fullName>
    </alternativeName>
    <alternativeName>
        <fullName evidence="1">Octanoyl-[acyl-carrier-protein]-protein N-octanoyltransferase</fullName>
    </alternativeName>
</protein>
<reference key="1">
    <citation type="journal article" date="2009" name="Genome Res.">
        <title>Newly introduced genomic prophage islands are critical determinants of in vivo competitiveness in the Liverpool epidemic strain of Pseudomonas aeruginosa.</title>
        <authorList>
            <person name="Winstanley C."/>
            <person name="Langille M.G.I."/>
            <person name="Fothergill J.L."/>
            <person name="Kukavica-Ibrulj I."/>
            <person name="Paradis-Bleau C."/>
            <person name="Sanschagrin F."/>
            <person name="Thomson N.R."/>
            <person name="Winsor G.L."/>
            <person name="Quail M.A."/>
            <person name="Lennard N."/>
            <person name="Bignell A."/>
            <person name="Clarke L."/>
            <person name="Seeger K."/>
            <person name="Saunders D."/>
            <person name="Harris D."/>
            <person name="Parkhill J."/>
            <person name="Hancock R.E.W."/>
            <person name="Brinkman F.S.L."/>
            <person name="Levesque R.C."/>
        </authorList>
    </citation>
    <scope>NUCLEOTIDE SEQUENCE [LARGE SCALE GENOMIC DNA]</scope>
    <source>
        <strain>LESB58</strain>
    </source>
</reference>
<gene>
    <name evidence="1" type="primary">lipB</name>
    <name type="ordered locus">PLES_09791</name>
</gene>
<evidence type="ECO:0000255" key="1">
    <source>
        <dbReference type="HAMAP-Rule" id="MF_00013"/>
    </source>
</evidence>
<evidence type="ECO:0000255" key="2">
    <source>
        <dbReference type="PROSITE-ProRule" id="PRU01067"/>
    </source>
</evidence>